<organism>
    <name type="scientific">Escherichia coli O1:K1 / APEC</name>
    <dbReference type="NCBI Taxonomy" id="405955"/>
    <lineage>
        <taxon>Bacteria</taxon>
        <taxon>Pseudomonadati</taxon>
        <taxon>Pseudomonadota</taxon>
        <taxon>Gammaproteobacteria</taxon>
        <taxon>Enterobacterales</taxon>
        <taxon>Enterobacteriaceae</taxon>
        <taxon>Escherichia</taxon>
    </lineage>
</organism>
<accession>A1AGU7</accession>
<sequence length="276" mass="31307">MLMITSFANPRVAQAFVDYMATQGVILTIQQHNQSDVWLADESQAERVRAELARFLENPADPRYLAASWQAGHTGSGLHYRRYPFFAALRERAGPVTWVMMIACVVVFIAMQILGDQEVMLWLAWPFDPTLKFEFWRYFTHALMHFSLMHILFNLLWWWYLGGAVEKRLGSGKLIVITLISALLSGYVQQKFSGPWFGGLSGVVYALMGYVWLRGERDPQSGIYLQRGLIIFALIWIVAGWFDLFGMSMANGAHIAGLAVGLAMAFVDSLNARKRK</sequence>
<keyword id="KW-0997">Cell inner membrane</keyword>
<keyword id="KW-1003">Cell membrane</keyword>
<keyword id="KW-0378">Hydrolase</keyword>
<keyword id="KW-0472">Membrane</keyword>
<keyword id="KW-0645">Protease</keyword>
<keyword id="KW-1185">Reference proteome</keyword>
<keyword id="KW-0720">Serine protease</keyword>
<keyword id="KW-0812">Transmembrane</keyword>
<keyword id="KW-1133">Transmembrane helix</keyword>
<protein>
    <recommendedName>
        <fullName evidence="1">Rhomboid protease GlpG</fullName>
        <ecNumber evidence="1">3.4.21.105</ecNumber>
    </recommendedName>
    <alternativeName>
        <fullName evidence="1">Intramembrane serine protease</fullName>
    </alternativeName>
</protein>
<feature type="chain" id="PRO_0000321682" description="Rhomboid protease GlpG">
    <location>
        <begin position="1"/>
        <end position="276"/>
    </location>
</feature>
<feature type="transmembrane region" description="Helical" evidence="1">
    <location>
        <begin position="94"/>
        <end position="114"/>
    </location>
</feature>
<feature type="transmembrane region" description="Helical" evidence="1">
    <location>
        <begin position="142"/>
        <end position="162"/>
    </location>
</feature>
<feature type="transmembrane region" description="Helical" evidence="1">
    <location>
        <begin position="169"/>
        <end position="189"/>
    </location>
</feature>
<feature type="transmembrane region" description="Helical" evidence="1">
    <location>
        <begin position="192"/>
        <end position="212"/>
    </location>
</feature>
<feature type="transmembrane region" description="Helical" evidence="1">
    <location>
        <begin position="229"/>
        <end position="249"/>
    </location>
</feature>
<feature type="transmembrane region" description="Helical" evidence="1">
    <location>
        <begin position="250"/>
        <end position="270"/>
    </location>
</feature>
<feature type="active site" description="Nucleophile" evidence="1">
    <location>
        <position position="201"/>
    </location>
</feature>
<feature type="active site" evidence="1">
    <location>
        <position position="254"/>
    </location>
</feature>
<name>GLPG_ECOK1</name>
<comment type="function">
    <text evidence="1">Rhomboid-type serine protease that catalyzes intramembrane proteolysis.</text>
</comment>
<comment type="catalytic activity">
    <reaction evidence="1">
        <text>Cleaves type-1 transmembrane domains using a catalytic dyad composed of serine and histidine that are contributed by different transmembrane domains.</text>
        <dbReference type="EC" id="3.4.21.105"/>
    </reaction>
</comment>
<comment type="subcellular location">
    <subcellularLocation>
        <location evidence="1">Cell inner membrane</location>
        <topology evidence="1">Multi-pass membrane protein</topology>
    </subcellularLocation>
</comment>
<comment type="similarity">
    <text evidence="1">Belongs to the peptidase S54 family.</text>
</comment>
<reference key="1">
    <citation type="journal article" date="2007" name="J. Bacteriol.">
        <title>The genome sequence of avian pathogenic Escherichia coli strain O1:K1:H7 shares strong similarities with human extraintestinal pathogenic E. coli genomes.</title>
        <authorList>
            <person name="Johnson T.J."/>
            <person name="Kariyawasam S."/>
            <person name="Wannemuehler Y."/>
            <person name="Mangiamele P."/>
            <person name="Johnson S.J."/>
            <person name="Doetkott C."/>
            <person name="Skyberg J.A."/>
            <person name="Lynne A.M."/>
            <person name="Johnson J.R."/>
            <person name="Nolan L.K."/>
        </authorList>
    </citation>
    <scope>NUCLEOTIDE SEQUENCE [LARGE SCALE GENOMIC DNA]</scope>
</reference>
<proteinExistence type="inferred from homology"/>
<gene>
    <name evidence="1" type="primary">glpG</name>
    <name type="ordered locus">Ecok1_33930</name>
    <name type="ORF">APECO1_3043</name>
</gene>
<evidence type="ECO:0000255" key="1">
    <source>
        <dbReference type="HAMAP-Rule" id="MF_01594"/>
    </source>
</evidence>
<dbReference type="EC" id="3.4.21.105" evidence="1"/>
<dbReference type="EMBL" id="CP000468">
    <property type="protein sequence ID" value="ABJ02887.1"/>
    <property type="molecule type" value="Genomic_DNA"/>
</dbReference>
<dbReference type="RefSeq" id="WP_000928723.1">
    <property type="nucleotide sequence ID" value="NZ_CADILS010000030.1"/>
</dbReference>
<dbReference type="BMRB" id="A1AGU7"/>
<dbReference type="SMR" id="A1AGU7"/>
<dbReference type="MEROPS" id="S54.016"/>
<dbReference type="GeneID" id="86862178"/>
<dbReference type="KEGG" id="ecv:APECO1_3043"/>
<dbReference type="HOGENOM" id="CLU_058989_0_0_6"/>
<dbReference type="Proteomes" id="UP000008216">
    <property type="component" value="Chromosome"/>
</dbReference>
<dbReference type="GO" id="GO:0005886">
    <property type="term" value="C:plasma membrane"/>
    <property type="evidence" value="ECO:0007669"/>
    <property type="project" value="UniProtKB-SubCell"/>
</dbReference>
<dbReference type="GO" id="GO:0004252">
    <property type="term" value="F:serine-type endopeptidase activity"/>
    <property type="evidence" value="ECO:0007669"/>
    <property type="project" value="UniProtKB-UniRule"/>
</dbReference>
<dbReference type="GO" id="GO:0006508">
    <property type="term" value="P:proteolysis"/>
    <property type="evidence" value="ECO:0007669"/>
    <property type="project" value="UniProtKB-UniRule"/>
</dbReference>
<dbReference type="FunFam" id="1.20.1540.10:FF:000003">
    <property type="entry name" value="Rhomboid protease GlpG"/>
    <property type="match status" value="1"/>
</dbReference>
<dbReference type="FunFam" id="3.30.70.2350:FF:000001">
    <property type="entry name" value="Rhomboid protease GlpG"/>
    <property type="match status" value="1"/>
</dbReference>
<dbReference type="Gene3D" id="3.30.70.2350">
    <property type="match status" value="1"/>
</dbReference>
<dbReference type="Gene3D" id="1.20.1540.10">
    <property type="entry name" value="Rhomboid-like"/>
    <property type="match status" value="1"/>
</dbReference>
<dbReference type="HAMAP" id="MF_01594">
    <property type="entry name" value="Rhomboid_GlpG"/>
    <property type="match status" value="1"/>
</dbReference>
<dbReference type="InterPro" id="IPR038236">
    <property type="entry name" value="GlpG_N_sf"/>
</dbReference>
<dbReference type="InterPro" id="IPR022732">
    <property type="entry name" value="Peptidase_S54_GlpG_N"/>
</dbReference>
<dbReference type="InterPro" id="IPR022764">
    <property type="entry name" value="Peptidase_S54_rhomboid_dom"/>
</dbReference>
<dbReference type="InterPro" id="IPR035952">
    <property type="entry name" value="Rhomboid-like_sf"/>
</dbReference>
<dbReference type="InterPro" id="IPR023662">
    <property type="entry name" value="Rhomboid_protease_GlpG"/>
</dbReference>
<dbReference type="NCBIfam" id="NF008155">
    <property type="entry name" value="PRK10907.1"/>
    <property type="match status" value="1"/>
</dbReference>
<dbReference type="NCBIfam" id="TIGR04239">
    <property type="entry name" value="rhombo_GlpG"/>
    <property type="match status" value="1"/>
</dbReference>
<dbReference type="PANTHER" id="PTHR43066:SF26">
    <property type="entry name" value="RHOMBOID PROTEASE GLPG"/>
    <property type="match status" value="1"/>
</dbReference>
<dbReference type="PANTHER" id="PTHR43066">
    <property type="entry name" value="RHOMBOID-RELATED PROTEIN"/>
    <property type="match status" value="1"/>
</dbReference>
<dbReference type="Pfam" id="PF01694">
    <property type="entry name" value="Rhomboid"/>
    <property type="match status" value="1"/>
</dbReference>
<dbReference type="Pfam" id="PF12122">
    <property type="entry name" value="Rhomboid_N"/>
    <property type="match status" value="1"/>
</dbReference>
<dbReference type="SUPFAM" id="SSF144091">
    <property type="entry name" value="Rhomboid-like"/>
    <property type="match status" value="1"/>
</dbReference>